<comment type="function">
    <text evidence="1">Catalyzes the dehydration of methylthioribulose-1-phosphate (MTRu-1-P) into 2,3-diketo-5-methylthiopentyl-1-phosphate (DK-MTP-1-P).</text>
</comment>
<comment type="catalytic activity">
    <reaction evidence="1">
        <text>5-(methylsulfanyl)-D-ribulose 1-phosphate = 5-methylsulfanyl-2,3-dioxopentyl phosphate + H2O</text>
        <dbReference type="Rhea" id="RHEA:15549"/>
        <dbReference type="ChEBI" id="CHEBI:15377"/>
        <dbReference type="ChEBI" id="CHEBI:58548"/>
        <dbReference type="ChEBI" id="CHEBI:58828"/>
        <dbReference type="EC" id="4.2.1.109"/>
    </reaction>
</comment>
<comment type="cofactor">
    <cofactor evidence="1">
        <name>Zn(2+)</name>
        <dbReference type="ChEBI" id="CHEBI:29105"/>
    </cofactor>
    <text evidence="1">Binds 1 zinc ion per subunit.</text>
</comment>
<comment type="pathway">
    <text evidence="1">Amino-acid biosynthesis; L-methionine biosynthesis via salvage pathway; L-methionine from S-methyl-5-thio-alpha-D-ribose 1-phosphate: step 2/6.</text>
</comment>
<comment type="similarity">
    <text evidence="1">Belongs to the aldolase class II family. MtnB subfamily.</text>
</comment>
<gene>
    <name evidence="1" type="primary">mtnB</name>
    <name type="ordered locus">SYO3AOP1_1268</name>
</gene>
<reference key="1">
    <citation type="journal article" date="2009" name="J. Bacteriol.">
        <title>Complete and draft genome sequences of six members of the Aquificales.</title>
        <authorList>
            <person name="Reysenbach A.-L."/>
            <person name="Hamamura N."/>
            <person name="Podar M."/>
            <person name="Griffiths E."/>
            <person name="Ferreira S."/>
            <person name="Hochstein R."/>
            <person name="Heidelberg J."/>
            <person name="Johnson J."/>
            <person name="Mead D."/>
            <person name="Pohorille A."/>
            <person name="Sarmiento M."/>
            <person name="Schweighofer K."/>
            <person name="Seshadri R."/>
            <person name="Voytek M.A."/>
        </authorList>
    </citation>
    <scope>NUCLEOTIDE SEQUENCE [LARGE SCALE GENOMIC DNA]</scope>
    <source>
        <strain>YO3AOP1</strain>
    </source>
</reference>
<organism>
    <name type="scientific">Sulfurihydrogenibium sp. (strain YO3AOP1)</name>
    <dbReference type="NCBI Taxonomy" id="436114"/>
    <lineage>
        <taxon>Bacteria</taxon>
        <taxon>Pseudomonadati</taxon>
        <taxon>Aquificota</taxon>
        <taxon>Aquificia</taxon>
        <taxon>Aquificales</taxon>
        <taxon>Hydrogenothermaceae</taxon>
        <taxon>Sulfurihydrogenibium</taxon>
    </lineage>
</organism>
<name>MTNB_SULSY</name>
<feature type="chain" id="PRO_0000357108" description="Methylthioribulose-1-phosphate dehydratase">
    <location>
        <begin position="1"/>
        <end position="215"/>
    </location>
</feature>
<feature type="binding site" evidence="1">
    <location>
        <position position="103"/>
    </location>
    <ligand>
        <name>Zn(2+)</name>
        <dbReference type="ChEBI" id="CHEBI:29105"/>
    </ligand>
</feature>
<feature type="binding site" evidence="1">
    <location>
        <position position="105"/>
    </location>
    <ligand>
        <name>Zn(2+)</name>
        <dbReference type="ChEBI" id="CHEBI:29105"/>
    </ligand>
</feature>
<sequence>MPERLYQEEKQKAVNVLNDLKIKLYNKGFFPATSGNLSYKLHDDPLIFAVTTSGKDKGTVTHEDVIFVDKDGKPVEKTKMKPSAETMVHSYIYQKTDAGCVIHVHTPANNFISYVYFEDGKVKIKDLEMIKALDIWKENAEIEVPIVDNFFDLKKLAEEAGKAINPDVPAVLIKTHGIYCWGRDEFEAKRHVEAFEFMFELMKNLIIFKGSKDIW</sequence>
<proteinExistence type="inferred from homology"/>
<accession>B2VAA6</accession>
<dbReference type="EC" id="4.2.1.109" evidence="1"/>
<dbReference type="EMBL" id="CP001080">
    <property type="protein sequence ID" value="ACD66879.1"/>
    <property type="molecule type" value="Genomic_DNA"/>
</dbReference>
<dbReference type="RefSeq" id="WP_012459940.1">
    <property type="nucleotide sequence ID" value="NC_010730.1"/>
</dbReference>
<dbReference type="SMR" id="B2VAA6"/>
<dbReference type="STRING" id="436114.SYO3AOP1_1268"/>
<dbReference type="KEGG" id="sul:SYO3AOP1_1268"/>
<dbReference type="eggNOG" id="COG0235">
    <property type="taxonomic scope" value="Bacteria"/>
</dbReference>
<dbReference type="HOGENOM" id="CLU_006033_4_1_0"/>
<dbReference type="UniPathway" id="UPA00904">
    <property type="reaction ID" value="UER00875"/>
</dbReference>
<dbReference type="GO" id="GO:0005737">
    <property type="term" value="C:cytoplasm"/>
    <property type="evidence" value="ECO:0007669"/>
    <property type="project" value="InterPro"/>
</dbReference>
<dbReference type="GO" id="GO:0046570">
    <property type="term" value="F:methylthioribulose 1-phosphate dehydratase activity"/>
    <property type="evidence" value="ECO:0007669"/>
    <property type="project" value="UniProtKB-UniRule"/>
</dbReference>
<dbReference type="GO" id="GO:0008270">
    <property type="term" value="F:zinc ion binding"/>
    <property type="evidence" value="ECO:0007669"/>
    <property type="project" value="UniProtKB-UniRule"/>
</dbReference>
<dbReference type="GO" id="GO:0019509">
    <property type="term" value="P:L-methionine salvage from methylthioadenosine"/>
    <property type="evidence" value="ECO:0007669"/>
    <property type="project" value="UniProtKB-UniRule"/>
</dbReference>
<dbReference type="Gene3D" id="3.40.225.10">
    <property type="entry name" value="Class II aldolase/adducin N-terminal domain"/>
    <property type="match status" value="1"/>
</dbReference>
<dbReference type="HAMAP" id="MF_01677">
    <property type="entry name" value="Salvage_MtnB"/>
    <property type="match status" value="1"/>
</dbReference>
<dbReference type="InterPro" id="IPR001303">
    <property type="entry name" value="Aldolase_II/adducin_N"/>
</dbReference>
<dbReference type="InterPro" id="IPR036409">
    <property type="entry name" value="Aldolase_II/adducin_N_sf"/>
</dbReference>
<dbReference type="InterPro" id="IPR017714">
    <property type="entry name" value="MethylthioRu-1-P_deHdtase_MtnB"/>
</dbReference>
<dbReference type="NCBIfam" id="NF005244">
    <property type="entry name" value="PRK06754.1"/>
    <property type="match status" value="1"/>
</dbReference>
<dbReference type="NCBIfam" id="TIGR03328">
    <property type="entry name" value="salvage_mtnB"/>
    <property type="match status" value="1"/>
</dbReference>
<dbReference type="PANTHER" id="PTHR10640">
    <property type="entry name" value="METHYLTHIORIBULOSE-1-PHOSPHATE DEHYDRATASE"/>
    <property type="match status" value="1"/>
</dbReference>
<dbReference type="PANTHER" id="PTHR10640:SF7">
    <property type="entry name" value="METHYLTHIORIBULOSE-1-PHOSPHATE DEHYDRATASE"/>
    <property type="match status" value="1"/>
</dbReference>
<dbReference type="Pfam" id="PF00596">
    <property type="entry name" value="Aldolase_II"/>
    <property type="match status" value="1"/>
</dbReference>
<dbReference type="SMART" id="SM01007">
    <property type="entry name" value="Aldolase_II"/>
    <property type="match status" value="1"/>
</dbReference>
<dbReference type="SUPFAM" id="SSF53639">
    <property type="entry name" value="AraD/HMP-PK domain-like"/>
    <property type="match status" value="1"/>
</dbReference>
<evidence type="ECO:0000255" key="1">
    <source>
        <dbReference type="HAMAP-Rule" id="MF_01677"/>
    </source>
</evidence>
<keyword id="KW-0028">Amino-acid biosynthesis</keyword>
<keyword id="KW-0456">Lyase</keyword>
<keyword id="KW-0479">Metal-binding</keyword>
<keyword id="KW-0486">Methionine biosynthesis</keyword>
<keyword id="KW-0862">Zinc</keyword>
<protein>
    <recommendedName>
        <fullName evidence="1">Methylthioribulose-1-phosphate dehydratase</fullName>
        <shortName evidence="1">MTRu-1-P dehydratase</shortName>
        <ecNumber evidence="1">4.2.1.109</ecNumber>
    </recommendedName>
</protein>